<dbReference type="EC" id="2.3.2.23"/>
<dbReference type="EMBL" id="BC130145">
    <property type="protein sequence ID" value="AAI30146.1"/>
    <property type="molecule type" value="mRNA"/>
</dbReference>
<dbReference type="RefSeq" id="NP_001091235.1">
    <property type="nucleotide sequence ID" value="NM_001097766.1"/>
</dbReference>
<dbReference type="BMRB" id="A1L3K1"/>
<dbReference type="SMR" id="A1L3K1"/>
<dbReference type="UniPathway" id="UPA00143"/>
<dbReference type="Proteomes" id="UP000186698">
    <property type="component" value="Unplaced"/>
</dbReference>
<dbReference type="GO" id="GO:0005680">
    <property type="term" value="C:anaphase-promoting complex"/>
    <property type="evidence" value="ECO:0000250"/>
    <property type="project" value="UniProtKB"/>
</dbReference>
<dbReference type="GO" id="GO:0005524">
    <property type="term" value="F:ATP binding"/>
    <property type="evidence" value="ECO:0007669"/>
    <property type="project" value="UniProtKB-KW"/>
</dbReference>
<dbReference type="GO" id="GO:0061631">
    <property type="term" value="F:ubiquitin conjugating enzyme activity"/>
    <property type="evidence" value="ECO:0007669"/>
    <property type="project" value="UniProtKB-EC"/>
</dbReference>
<dbReference type="GO" id="GO:0031145">
    <property type="term" value="P:anaphase-promoting complex-dependent catabolic process"/>
    <property type="evidence" value="ECO:0000250"/>
    <property type="project" value="UniProtKB"/>
</dbReference>
<dbReference type="GO" id="GO:0051301">
    <property type="term" value="P:cell division"/>
    <property type="evidence" value="ECO:0007669"/>
    <property type="project" value="UniProtKB-KW"/>
</dbReference>
<dbReference type="GO" id="GO:0010458">
    <property type="term" value="P:exit from mitosis"/>
    <property type="evidence" value="ECO:0000250"/>
    <property type="project" value="UniProtKB"/>
</dbReference>
<dbReference type="GO" id="GO:0010994">
    <property type="term" value="P:free ubiquitin chain polymerization"/>
    <property type="evidence" value="ECO:0000250"/>
    <property type="project" value="UniProtKB"/>
</dbReference>
<dbReference type="GO" id="GO:1904668">
    <property type="term" value="P:positive regulation of ubiquitin protein ligase activity"/>
    <property type="evidence" value="ECO:0000250"/>
    <property type="project" value="UniProtKB"/>
</dbReference>
<dbReference type="GO" id="GO:0070979">
    <property type="term" value="P:protein K11-linked ubiquitination"/>
    <property type="evidence" value="ECO:0000250"/>
    <property type="project" value="UniProtKB"/>
</dbReference>
<dbReference type="CDD" id="cd23804">
    <property type="entry name" value="UBCc_UBE2S"/>
    <property type="match status" value="1"/>
</dbReference>
<dbReference type="FunFam" id="3.10.110.10:FF:000034">
    <property type="entry name" value="Ubiquitin-conjugating enzyme E2 S"/>
    <property type="match status" value="1"/>
</dbReference>
<dbReference type="Gene3D" id="3.10.110.10">
    <property type="entry name" value="Ubiquitin Conjugating Enzyme"/>
    <property type="match status" value="1"/>
</dbReference>
<dbReference type="InterPro" id="IPR050113">
    <property type="entry name" value="Ub_conjugating_enzyme"/>
</dbReference>
<dbReference type="InterPro" id="IPR000608">
    <property type="entry name" value="UBQ-conjugat_E2_core"/>
</dbReference>
<dbReference type="InterPro" id="IPR023313">
    <property type="entry name" value="UBQ-conjugating_AS"/>
</dbReference>
<dbReference type="InterPro" id="IPR016135">
    <property type="entry name" value="UBQ-conjugating_enzyme/RWD"/>
</dbReference>
<dbReference type="PANTHER" id="PTHR24067">
    <property type="entry name" value="UBIQUITIN-CONJUGATING ENZYME E2"/>
    <property type="match status" value="1"/>
</dbReference>
<dbReference type="Pfam" id="PF00179">
    <property type="entry name" value="UQ_con"/>
    <property type="match status" value="1"/>
</dbReference>
<dbReference type="SMART" id="SM00212">
    <property type="entry name" value="UBCc"/>
    <property type="match status" value="1"/>
</dbReference>
<dbReference type="SUPFAM" id="SSF54495">
    <property type="entry name" value="UBC-like"/>
    <property type="match status" value="1"/>
</dbReference>
<dbReference type="PROSITE" id="PS00183">
    <property type="entry name" value="UBC_1"/>
    <property type="match status" value="1"/>
</dbReference>
<dbReference type="PROSITE" id="PS50127">
    <property type="entry name" value="UBC_2"/>
    <property type="match status" value="1"/>
</dbReference>
<reference key="1">
    <citation type="submission" date="2006-12" db="EMBL/GenBank/DDBJ databases">
        <authorList>
            <consortium name="NIH - Xenopus Gene Collection (XGC) project"/>
        </authorList>
    </citation>
    <scope>NUCLEOTIDE SEQUENCE [LARGE SCALE MRNA]</scope>
    <source>
        <tissue>Embryo</tissue>
    </source>
</reference>
<protein>
    <recommendedName>
        <fullName>Ubiquitin-conjugating enzyme E2 S-A</fullName>
        <ecNumber>2.3.2.23</ecNumber>
    </recommendedName>
    <alternativeName>
        <fullName>E2 ubiquitin-conjugating enzyme S-A</fullName>
    </alternativeName>
    <alternativeName>
        <fullName>Ubiquitin carrier protein S-A</fullName>
    </alternativeName>
    <alternativeName>
        <fullName>Ubiquitin-protein ligase S-A</fullName>
    </alternativeName>
</protein>
<feature type="chain" id="PRO_0000390431" description="Ubiquitin-conjugating enzyme E2 S-A">
    <location>
        <begin position="1"/>
        <end position="223"/>
    </location>
</feature>
<feature type="domain" description="UBC core" evidence="1">
    <location>
        <begin position="11"/>
        <end position="157"/>
    </location>
</feature>
<feature type="region of interest" description="Disordered" evidence="3">
    <location>
        <begin position="170"/>
        <end position="223"/>
    </location>
</feature>
<feature type="compositionally biased region" description="Basic residues" evidence="3">
    <location>
        <begin position="209"/>
        <end position="223"/>
    </location>
</feature>
<feature type="active site" description="Glycyl thioester intermediate" evidence="1 2">
    <location>
        <position position="95"/>
    </location>
</feature>
<keyword id="KW-0067">ATP-binding</keyword>
<keyword id="KW-0131">Cell cycle</keyword>
<keyword id="KW-0132">Cell division</keyword>
<keyword id="KW-0547">Nucleotide-binding</keyword>
<keyword id="KW-1185">Reference proteome</keyword>
<keyword id="KW-0808">Transferase</keyword>
<keyword id="KW-0833">Ubl conjugation pathway</keyword>
<organism>
    <name type="scientific">Xenopus laevis</name>
    <name type="common">African clawed frog</name>
    <dbReference type="NCBI Taxonomy" id="8355"/>
    <lineage>
        <taxon>Eukaryota</taxon>
        <taxon>Metazoa</taxon>
        <taxon>Chordata</taxon>
        <taxon>Craniata</taxon>
        <taxon>Vertebrata</taxon>
        <taxon>Euteleostomi</taxon>
        <taxon>Amphibia</taxon>
        <taxon>Batrachia</taxon>
        <taxon>Anura</taxon>
        <taxon>Pipoidea</taxon>
        <taxon>Pipidae</taxon>
        <taxon>Xenopodinae</taxon>
        <taxon>Xenopus</taxon>
        <taxon>Xenopus</taxon>
    </lineage>
</organism>
<comment type="function">
    <text evidence="1">Catalyzes the covalent attachment of ubiquitin to other proteins. Acts as an essential factor of the anaphase promoting complex/cyclosome (APC/C), a cell cycle-regulated ubiquitin ligase that controls progression through mitosis. Acts by specifically elongating 'Lys-11'-linked polyubiquitin chains initiated by the E2 enzyme ube2c/ubch10 on APC/C substrates, enhancing the degradation of APC/C substrates by the proteasome and promoting mitotic exit.</text>
</comment>
<comment type="catalytic activity">
    <reaction evidence="1 2">
        <text>S-ubiquitinyl-[E1 ubiquitin-activating enzyme]-L-cysteine + [E2 ubiquitin-conjugating enzyme]-L-cysteine = [E1 ubiquitin-activating enzyme]-L-cysteine + S-ubiquitinyl-[E2 ubiquitin-conjugating enzyme]-L-cysteine.</text>
        <dbReference type="EC" id="2.3.2.23"/>
    </reaction>
</comment>
<comment type="pathway">
    <text evidence="1">Protein modification; protein ubiquitination.</text>
</comment>
<comment type="similarity">
    <text evidence="1">Belongs to the ubiquitin-conjugating enzyme family.</text>
</comment>
<proteinExistence type="evidence at transcript level"/>
<sequence>MNSNVENLPPHIIRLVYKEVTTLTADPPDGIKVFPNEEDLTDLQVTIEGPEGTPYAGGLFRMKLLLGKDFPASPPKGYFLTKIFHPNVGPNGEICVNVLKRDWTAELGIRHVLLTIKCLLIHPNPESALNEEAGRLLLENYEEYAARARLLTEIHGGACSTSSGRAEATQDLASGASASSADPMIPGVLGGAEGPMAKKHAGERDKKLAAKKKLDKKRALRRL</sequence>
<name>UB2SA_XENLA</name>
<accession>A1L3K1</accession>
<evidence type="ECO:0000255" key="1">
    <source>
        <dbReference type="PROSITE-ProRule" id="PRU00388"/>
    </source>
</evidence>
<evidence type="ECO:0000255" key="2">
    <source>
        <dbReference type="PROSITE-ProRule" id="PRU10133"/>
    </source>
</evidence>
<evidence type="ECO:0000256" key="3">
    <source>
        <dbReference type="SAM" id="MobiDB-lite"/>
    </source>
</evidence>
<gene>
    <name type="primary">ube2s-a</name>
    <name type="synonym">ube2s.1-a</name>
</gene>